<accession>B2XWJ3</accession>
<organism>
    <name type="scientific">Fagopyrum esculentum subsp. ancestrale</name>
    <name type="common">Wild buckwheat</name>
    <dbReference type="NCBI Taxonomy" id="180217"/>
    <lineage>
        <taxon>Eukaryota</taxon>
        <taxon>Viridiplantae</taxon>
        <taxon>Streptophyta</taxon>
        <taxon>Embryophyta</taxon>
        <taxon>Tracheophyta</taxon>
        <taxon>Spermatophyta</taxon>
        <taxon>Magnoliopsida</taxon>
        <taxon>eudicotyledons</taxon>
        <taxon>Gunneridae</taxon>
        <taxon>Pentapetalae</taxon>
        <taxon>Caryophyllales</taxon>
        <taxon>Polygonaceae</taxon>
        <taxon>Polygonoideae</taxon>
        <taxon>Fagopyreae</taxon>
        <taxon>Fagopyrum</taxon>
    </lineage>
</organism>
<comment type="function">
    <text evidence="1">NDH shuttles electrons from NAD(P)H:plastoquinone, via FMN and iron-sulfur (Fe-S) centers, to quinones in the photosynthetic chain and possibly in a chloroplast respiratory chain. The immediate electron acceptor for the enzyme in this species is believed to be plastoquinone. Couples the redox reaction to proton translocation, and thus conserves the redox energy in a proton gradient.</text>
</comment>
<comment type="catalytic activity">
    <reaction evidence="1">
        <text>a plastoquinone + NADH + (n+1) H(+)(in) = a plastoquinol + NAD(+) + n H(+)(out)</text>
        <dbReference type="Rhea" id="RHEA:42608"/>
        <dbReference type="Rhea" id="RHEA-COMP:9561"/>
        <dbReference type="Rhea" id="RHEA-COMP:9562"/>
        <dbReference type="ChEBI" id="CHEBI:15378"/>
        <dbReference type="ChEBI" id="CHEBI:17757"/>
        <dbReference type="ChEBI" id="CHEBI:57540"/>
        <dbReference type="ChEBI" id="CHEBI:57945"/>
        <dbReference type="ChEBI" id="CHEBI:62192"/>
    </reaction>
</comment>
<comment type="catalytic activity">
    <reaction evidence="1">
        <text>a plastoquinone + NADPH + (n+1) H(+)(in) = a plastoquinol + NADP(+) + n H(+)(out)</text>
        <dbReference type="Rhea" id="RHEA:42612"/>
        <dbReference type="Rhea" id="RHEA-COMP:9561"/>
        <dbReference type="Rhea" id="RHEA-COMP:9562"/>
        <dbReference type="ChEBI" id="CHEBI:15378"/>
        <dbReference type="ChEBI" id="CHEBI:17757"/>
        <dbReference type="ChEBI" id="CHEBI:57783"/>
        <dbReference type="ChEBI" id="CHEBI:58349"/>
        <dbReference type="ChEBI" id="CHEBI:62192"/>
    </reaction>
</comment>
<comment type="subunit">
    <text evidence="1">NDH is composed of at least 16 different subunits, 5 of which are encoded in the nucleus.</text>
</comment>
<comment type="subcellular location">
    <subcellularLocation>
        <location evidence="1">Plastid</location>
        <location evidence="1">Chloroplast thylakoid membrane</location>
        <topology evidence="1">Multi-pass membrane protein</topology>
    </subcellularLocation>
</comment>
<comment type="similarity">
    <text evidence="1">Belongs to the complex I subunit 4L family.</text>
</comment>
<reference key="1">
    <citation type="journal article" date="2008" name="BMC Plant Biol.">
        <title>Comparative chloroplast genomics and phylogenetics of Fagopyrum esculentum ssp. ancestrale - a wild ancestor of cultivated buckwheat.</title>
        <authorList>
            <person name="Logacheva M.D."/>
            <person name="Samigullin T.H."/>
            <person name="Dhingra A."/>
            <person name="Penin A.A."/>
        </authorList>
    </citation>
    <scope>NUCLEOTIDE SEQUENCE [LARGE SCALE GENOMIC DNA]</scope>
</reference>
<dbReference type="EC" id="7.1.1.-" evidence="1"/>
<dbReference type="EMBL" id="EU254477">
    <property type="protein sequence ID" value="ABY79784.1"/>
    <property type="molecule type" value="Genomic_DNA"/>
</dbReference>
<dbReference type="RefSeq" id="YP_001936569.1">
    <property type="nucleotide sequence ID" value="NC_010776.1"/>
</dbReference>
<dbReference type="SMR" id="B2XWJ3"/>
<dbReference type="GeneID" id="6335974"/>
<dbReference type="GO" id="GO:0009535">
    <property type="term" value="C:chloroplast thylakoid membrane"/>
    <property type="evidence" value="ECO:0007669"/>
    <property type="project" value="UniProtKB-SubCell"/>
</dbReference>
<dbReference type="GO" id="GO:0030964">
    <property type="term" value="C:NADH dehydrogenase complex"/>
    <property type="evidence" value="ECO:0007669"/>
    <property type="project" value="TreeGrafter"/>
</dbReference>
<dbReference type="GO" id="GO:0016655">
    <property type="term" value="F:oxidoreductase activity, acting on NAD(P)H, quinone or similar compound as acceptor"/>
    <property type="evidence" value="ECO:0007669"/>
    <property type="project" value="UniProtKB-UniRule"/>
</dbReference>
<dbReference type="GO" id="GO:0048038">
    <property type="term" value="F:quinone binding"/>
    <property type="evidence" value="ECO:0007669"/>
    <property type="project" value="UniProtKB-KW"/>
</dbReference>
<dbReference type="GO" id="GO:0042773">
    <property type="term" value="P:ATP synthesis coupled electron transport"/>
    <property type="evidence" value="ECO:0007669"/>
    <property type="project" value="InterPro"/>
</dbReference>
<dbReference type="GO" id="GO:0019684">
    <property type="term" value="P:photosynthesis, light reaction"/>
    <property type="evidence" value="ECO:0007669"/>
    <property type="project" value="UniProtKB-UniRule"/>
</dbReference>
<dbReference type="FunFam" id="1.10.287.3510:FF:000001">
    <property type="entry name" value="NADH-quinone oxidoreductase subunit K"/>
    <property type="match status" value="1"/>
</dbReference>
<dbReference type="Gene3D" id="1.10.287.3510">
    <property type="match status" value="1"/>
</dbReference>
<dbReference type="HAMAP" id="MF_01456">
    <property type="entry name" value="NDH1_NuoK"/>
    <property type="match status" value="1"/>
</dbReference>
<dbReference type="InterPro" id="IPR001133">
    <property type="entry name" value="NADH_UbQ_OxRdtase_chain4L/K"/>
</dbReference>
<dbReference type="InterPro" id="IPR039428">
    <property type="entry name" value="NUOK/Mnh_C1-like"/>
</dbReference>
<dbReference type="NCBIfam" id="NF004320">
    <property type="entry name" value="PRK05715.1-2"/>
    <property type="match status" value="1"/>
</dbReference>
<dbReference type="NCBIfam" id="NF004322">
    <property type="entry name" value="PRK05715.1-4"/>
    <property type="match status" value="1"/>
</dbReference>
<dbReference type="NCBIfam" id="NF004323">
    <property type="entry name" value="PRK05715.1-5"/>
    <property type="match status" value="1"/>
</dbReference>
<dbReference type="PANTHER" id="PTHR11434:SF16">
    <property type="entry name" value="NADH-UBIQUINONE OXIDOREDUCTASE CHAIN 4L"/>
    <property type="match status" value="1"/>
</dbReference>
<dbReference type="PANTHER" id="PTHR11434">
    <property type="entry name" value="NADH-UBIQUINONE OXIDOREDUCTASE SUBUNIT ND4L"/>
    <property type="match status" value="1"/>
</dbReference>
<dbReference type="Pfam" id="PF00420">
    <property type="entry name" value="Oxidored_q2"/>
    <property type="match status" value="1"/>
</dbReference>
<feature type="chain" id="PRO_0000360329" description="NAD(P)H-quinone oxidoreductase subunit 4L, chloroplastic">
    <location>
        <begin position="1"/>
        <end position="101"/>
    </location>
</feature>
<feature type="transmembrane region" description="Helical" evidence="1">
    <location>
        <begin position="2"/>
        <end position="22"/>
    </location>
</feature>
<feature type="transmembrane region" description="Helical" evidence="1">
    <location>
        <begin position="32"/>
        <end position="52"/>
    </location>
</feature>
<feature type="transmembrane region" description="Helical" evidence="1">
    <location>
        <begin position="61"/>
        <end position="81"/>
    </location>
</feature>
<keyword id="KW-0150">Chloroplast</keyword>
<keyword id="KW-0472">Membrane</keyword>
<keyword id="KW-0520">NAD</keyword>
<keyword id="KW-0521">NADP</keyword>
<keyword id="KW-0934">Plastid</keyword>
<keyword id="KW-0618">Plastoquinone</keyword>
<keyword id="KW-0874">Quinone</keyword>
<keyword id="KW-0793">Thylakoid</keyword>
<keyword id="KW-1278">Translocase</keyword>
<keyword id="KW-0812">Transmembrane</keyword>
<keyword id="KW-1133">Transmembrane helix</keyword>
<keyword id="KW-0813">Transport</keyword>
<geneLocation type="chloroplast"/>
<proteinExistence type="inferred from homology"/>
<sequence>MMLEHVLVLSAYLFSIGIYGLITSRNLVRALMCLELILNAVNLNFVTFSDFFDSRQLKGNIFSIFVIAIAAAEAAIGPAIVSAIYRNRKSTRINQSNLLNK</sequence>
<gene>
    <name evidence="1" type="primary">ndhE</name>
</gene>
<evidence type="ECO:0000255" key="1">
    <source>
        <dbReference type="HAMAP-Rule" id="MF_01456"/>
    </source>
</evidence>
<protein>
    <recommendedName>
        <fullName evidence="1">NAD(P)H-quinone oxidoreductase subunit 4L, chloroplastic</fullName>
        <ecNumber evidence="1">7.1.1.-</ecNumber>
    </recommendedName>
    <alternativeName>
        <fullName evidence="1">NAD(P)H dehydrogenase subunit 4L</fullName>
    </alternativeName>
    <alternativeName>
        <fullName evidence="1">NADH-plastoquinone oxidoreductase subunit 4L</fullName>
    </alternativeName>
</protein>
<name>NU4LC_FAGEA</name>